<name>NFL_XENTR</name>
<protein>
    <recommendedName>
        <fullName>Neurofilament light polypeptide</fullName>
        <shortName>NF-L</shortName>
    </recommendedName>
    <alternativeName>
        <fullName>Neurofilament triplet L protein</fullName>
    </alternativeName>
</protein>
<reference key="1">
    <citation type="submission" date="2008-07" db="EMBL/GenBank/DDBJ databases">
        <authorList>
            <consortium name="NIH - Xenopus Gene Collection (XGC) project"/>
        </authorList>
    </citation>
    <scope>NUCLEOTIDE SEQUENCE [LARGE SCALE MRNA]</scope>
    <source>
        <tissue>Embryo</tissue>
    </source>
</reference>
<evidence type="ECO:0000250" key="1"/>
<evidence type="ECO:0000250" key="2">
    <source>
        <dbReference type="UniProtKB" id="P08551"/>
    </source>
</evidence>
<evidence type="ECO:0000250" key="3">
    <source>
        <dbReference type="UniProtKB" id="P19527"/>
    </source>
</evidence>
<evidence type="ECO:0000255" key="4">
    <source>
        <dbReference type="PROSITE-ProRule" id="PRU01188"/>
    </source>
</evidence>
<evidence type="ECO:0000256" key="5">
    <source>
        <dbReference type="SAM" id="MobiDB-lite"/>
    </source>
</evidence>
<accession>B4F721</accession>
<proteinExistence type="evidence at transcript level"/>
<feature type="initiator methionine" description="Removed" evidence="1">
    <location>
        <position position="1"/>
    </location>
</feature>
<feature type="chain" id="PRO_0000373800" description="Neurofilament light polypeptide">
    <location>
        <begin position="2"/>
        <end position="557"/>
    </location>
</feature>
<feature type="domain" description="IF rod" evidence="4">
    <location>
        <begin position="86"/>
        <end position="396"/>
    </location>
</feature>
<feature type="region of interest" description="Head" evidence="1">
    <location>
        <begin position="2"/>
        <end position="89"/>
    </location>
</feature>
<feature type="region of interest" description="Coil 1A" evidence="1">
    <location>
        <begin position="90"/>
        <end position="121"/>
    </location>
</feature>
<feature type="region of interest" description="Linker 1" evidence="1">
    <location>
        <begin position="122"/>
        <end position="134"/>
    </location>
</feature>
<feature type="region of interest" description="Coil 1B" evidence="1">
    <location>
        <begin position="135"/>
        <end position="230"/>
    </location>
</feature>
<feature type="region of interest" description="Linker 12" evidence="1">
    <location>
        <begin position="231"/>
        <end position="248"/>
    </location>
</feature>
<feature type="region of interest" description="Coil 2A" evidence="1">
    <location>
        <begin position="249"/>
        <end position="267"/>
    </location>
</feature>
<feature type="region of interest" description="Linker 2" evidence="1">
    <location>
        <begin position="268"/>
        <end position="276"/>
    </location>
</feature>
<feature type="region of interest" description="Coil 2B" evidence="1">
    <location>
        <begin position="277"/>
        <end position="392"/>
    </location>
</feature>
<feature type="region of interest" description="Tail" evidence="1">
    <location>
        <begin position="393"/>
        <end position="557"/>
    </location>
</feature>
<feature type="region of interest" description="Tail, subdomain A" evidence="1">
    <location>
        <begin position="393"/>
        <end position="437"/>
    </location>
</feature>
<feature type="region of interest" description="Tail, subdomain B (acidic)" evidence="1">
    <location>
        <begin position="438"/>
        <end position="557"/>
    </location>
</feature>
<feature type="region of interest" description="Disordered" evidence="5">
    <location>
        <begin position="452"/>
        <end position="557"/>
    </location>
</feature>
<feature type="compositionally biased region" description="Basic and acidic residues" evidence="5">
    <location>
        <begin position="453"/>
        <end position="464"/>
    </location>
</feature>
<feature type="compositionally biased region" description="Acidic residues" evidence="5">
    <location>
        <begin position="465"/>
        <end position="538"/>
    </location>
</feature>
<feature type="compositionally biased region" description="Basic and acidic residues" evidence="5">
    <location>
        <begin position="539"/>
        <end position="548"/>
    </location>
</feature>
<feature type="modified residue" description="N-acetylserine" evidence="1">
    <location>
        <position position="2"/>
    </location>
</feature>
<comment type="function">
    <text evidence="2">Neurofilaments usually contain three intermediate filament proteins: NEFL, NEFM, and NEFH which are involved in the maintenance of neuronal caliber. May additionally cooperate with other neuronal intermediate filament proteins to form neuronal filamentous networks (By similarity).</text>
</comment>
<comment type="subunit">
    <text evidence="3">Forms homodimers (in vitro).</text>
</comment>
<comment type="subcellular location">
    <subcellularLocation>
        <location evidence="2">Cell projection</location>
        <location evidence="2">Axon</location>
    </subcellularLocation>
    <subcellularLocation>
        <location evidence="2">Cytoplasm</location>
        <location evidence="2">Cytoskeleton</location>
    </subcellularLocation>
</comment>
<comment type="miscellaneous">
    <text evidence="1">NF-L is the most abundant of the three neurofilament proteins and, as the other nonepithelial intermediate filament proteins, it can form homomeric 10-nm filaments.</text>
</comment>
<comment type="similarity">
    <text evidence="4">Belongs to the intermediate filament family.</text>
</comment>
<dbReference type="EMBL" id="BC168098">
    <property type="protein sequence ID" value="AAI68098.1"/>
    <property type="molecule type" value="mRNA"/>
</dbReference>
<dbReference type="SMR" id="B4F721"/>
<dbReference type="FunCoup" id="B4F721">
    <property type="interactions" value="297"/>
</dbReference>
<dbReference type="STRING" id="8364.ENSXETP00000048761"/>
<dbReference type="PaxDb" id="8364-ENSXETP00000022374"/>
<dbReference type="eggNOG" id="ENOG502QSXY">
    <property type="taxonomic scope" value="Eukaryota"/>
</dbReference>
<dbReference type="InParanoid" id="B4F721"/>
<dbReference type="Proteomes" id="UP000008143">
    <property type="component" value="Unplaced"/>
</dbReference>
<dbReference type="GO" id="GO:0030424">
    <property type="term" value="C:axon"/>
    <property type="evidence" value="ECO:0007669"/>
    <property type="project" value="UniProtKB-SubCell"/>
</dbReference>
<dbReference type="GO" id="GO:0005737">
    <property type="term" value="C:cytoplasm"/>
    <property type="evidence" value="ECO:0007669"/>
    <property type="project" value="UniProtKB-KW"/>
</dbReference>
<dbReference type="GO" id="GO:0005882">
    <property type="term" value="C:intermediate filament"/>
    <property type="evidence" value="ECO:0007669"/>
    <property type="project" value="UniProtKB-KW"/>
</dbReference>
<dbReference type="FunFam" id="1.20.5.1160:FF:000001">
    <property type="entry name" value="Keratin type II"/>
    <property type="match status" value="1"/>
</dbReference>
<dbReference type="FunFam" id="1.20.5.170:FF:000002">
    <property type="entry name" value="Type I keratin KA11"/>
    <property type="match status" value="1"/>
</dbReference>
<dbReference type="FunFam" id="1.20.5.500:FF:000001">
    <property type="entry name" value="Type II keratin 23"/>
    <property type="match status" value="1"/>
</dbReference>
<dbReference type="Gene3D" id="1.20.5.170">
    <property type="match status" value="1"/>
</dbReference>
<dbReference type="Gene3D" id="1.20.5.500">
    <property type="entry name" value="Single helix bin"/>
    <property type="match status" value="1"/>
</dbReference>
<dbReference type="Gene3D" id="1.20.5.1160">
    <property type="entry name" value="Vasodilator-stimulated phosphoprotein"/>
    <property type="match status" value="1"/>
</dbReference>
<dbReference type="InterPro" id="IPR018039">
    <property type="entry name" value="IF_conserved"/>
</dbReference>
<dbReference type="InterPro" id="IPR039008">
    <property type="entry name" value="IF_rod_dom"/>
</dbReference>
<dbReference type="InterPro" id="IPR006821">
    <property type="entry name" value="Intermed_filament_DNA-bd"/>
</dbReference>
<dbReference type="InterPro" id="IPR050405">
    <property type="entry name" value="Intermediate_filament"/>
</dbReference>
<dbReference type="PANTHER" id="PTHR45652">
    <property type="entry name" value="GLIAL FIBRILLARY ACIDIC PROTEIN"/>
    <property type="match status" value="1"/>
</dbReference>
<dbReference type="PANTHER" id="PTHR45652:SF8">
    <property type="entry name" value="NEUROFILAMENT LIGHT POLYPEPTIDE"/>
    <property type="match status" value="1"/>
</dbReference>
<dbReference type="Pfam" id="PF00038">
    <property type="entry name" value="Filament"/>
    <property type="match status" value="1"/>
</dbReference>
<dbReference type="Pfam" id="PF04732">
    <property type="entry name" value="Filament_head"/>
    <property type="match status" value="1"/>
</dbReference>
<dbReference type="SMART" id="SM01391">
    <property type="entry name" value="Filament"/>
    <property type="match status" value="1"/>
</dbReference>
<dbReference type="SUPFAM" id="SSF64593">
    <property type="entry name" value="Intermediate filament protein, coiled coil region"/>
    <property type="match status" value="2"/>
</dbReference>
<dbReference type="PROSITE" id="PS00226">
    <property type="entry name" value="IF_ROD_1"/>
    <property type="match status" value="1"/>
</dbReference>
<dbReference type="PROSITE" id="PS51842">
    <property type="entry name" value="IF_ROD_2"/>
    <property type="match status" value="1"/>
</dbReference>
<gene>
    <name type="primary">nefl</name>
</gene>
<keyword id="KW-0007">Acetylation</keyword>
<keyword id="KW-0966">Cell projection</keyword>
<keyword id="KW-0175">Coiled coil</keyword>
<keyword id="KW-0963">Cytoplasm</keyword>
<keyword id="KW-0206">Cytoskeleton</keyword>
<keyword id="KW-0403">Intermediate filament</keyword>
<keyword id="KW-1185">Reference proteome</keyword>
<sequence>MSSYSYDPYYTSYKRRVVESSPRVHIRSSYVSPSRTTYSPVVSSTMRRSYAASSSSSSSLLHGVDTMDLSQVAAISSDLKIVRTQEKAQLQDLNDRFANFIERVHELEQRNKVLEAELLLLRQKHNEPSRLRDLYEQEVRELRLAQEEATGDRQTMRNERERLEDALRLLQGRYEEEALSREDAEARLLDVRKEADMAALARVELEKRMDSLLDEIAFLKKVHEEELAQLQSQVQYAQISLEVEVAKPDLSSALRDIRAQYEKLAAKNMQSAEDWFKSRFTVLTQSAARNTDAVRAAKDEVSESRRMLSAKGLEIEACRGVNDALERQIQELEEKQSGEIAGMQDAINKLEEELRNTKSEMARYLKEYQDLLNVKMALDIEIAAYRKLLEGEETRLSFSGVGAITSGYTQSAPVFGRSAYSLQSSSYMTSRAFPTYYSSHVQEEQLDIEETIESSRAEEAKAEAPEEEEEEAGEEEAEGGEGDEGEGEEGEEAKEEEAEEEGEGEEKEEEEEGEGEAEGEAEGEGEAEGEGEEEEEGKGEEPAEEESKKKKKKKKKK</sequence>
<organism>
    <name type="scientific">Xenopus tropicalis</name>
    <name type="common">Western clawed frog</name>
    <name type="synonym">Silurana tropicalis</name>
    <dbReference type="NCBI Taxonomy" id="8364"/>
    <lineage>
        <taxon>Eukaryota</taxon>
        <taxon>Metazoa</taxon>
        <taxon>Chordata</taxon>
        <taxon>Craniata</taxon>
        <taxon>Vertebrata</taxon>
        <taxon>Euteleostomi</taxon>
        <taxon>Amphibia</taxon>
        <taxon>Batrachia</taxon>
        <taxon>Anura</taxon>
        <taxon>Pipoidea</taxon>
        <taxon>Pipidae</taxon>
        <taxon>Xenopodinae</taxon>
        <taxon>Xenopus</taxon>
        <taxon>Silurana</taxon>
    </lineage>
</organism>